<protein>
    <recommendedName>
        <fullName evidence="2">Elongation factor Tu</fullName>
        <shortName evidence="2">EF-Tu</shortName>
        <ecNumber evidence="2">3.6.5.3</ecNumber>
    </recommendedName>
</protein>
<proteinExistence type="inferred from homology"/>
<name>EFTU_AERHH</name>
<keyword id="KW-0963">Cytoplasm</keyword>
<keyword id="KW-0251">Elongation factor</keyword>
<keyword id="KW-0342">GTP-binding</keyword>
<keyword id="KW-0378">Hydrolase</keyword>
<keyword id="KW-0460">Magnesium</keyword>
<keyword id="KW-0479">Metal-binding</keyword>
<keyword id="KW-0547">Nucleotide-binding</keyword>
<keyword id="KW-0648">Protein biosynthesis</keyword>
<keyword id="KW-1185">Reference proteome</keyword>
<comment type="function">
    <text evidence="2">GTP hydrolase that promotes the GTP-dependent binding of aminoacyl-tRNA to the A-site of ribosomes during protein biosynthesis.</text>
</comment>
<comment type="catalytic activity">
    <reaction evidence="2">
        <text>GTP + H2O = GDP + phosphate + H(+)</text>
        <dbReference type="Rhea" id="RHEA:19669"/>
        <dbReference type="ChEBI" id="CHEBI:15377"/>
        <dbReference type="ChEBI" id="CHEBI:15378"/>
        <dbReference type="ChEBI" id="CHEBI:37565"/>
        <dbReference type="ChEBI" id="CHEBI:43474"/>
        <dbReference type="ChEBI" id="CHEBI:58189"/>
        <dbReference type="EC" id="3.6.5.3"/>
    </reaction>
    <physiologicalReaction direction="left-to-right" evidence="2">
        <dbReference type="Rhea" id="RHEA:19670"/>
    </physiologicalReaction>
</comment>
<comment type="subunit">
    <text evidence="2">Monomer.</text>
</comment>
<comment type="subcellular location">
    <subcellularLocation>
        <location evidence="2">Cytoplasm</location>
    </subcellularLocation>
</comment>
<comment type="similarity">
    <text evidence="2">Belongs to the TRAFAC class translation factor GTPase superfamily. Classic translation factor GTPase family. EF-Tu/EF-1A subfamily.</text>
</comment>
<reference key="1">
    <citation type="journal article" date="2006" name="J. Bacteriol.">
        <title>Genome sequence of Aeromonas hydrophila ATCC 7966T: jack of all trades.</title>
        <authorList>
            <person name="Seshadri R."/>
            <person name="Joseph S.W."/>
            <person name="Chopra A.K."/>
            <person name="Sha J."/>
            <person name="Shaw J."/>
            <person name="Graf J."/>
            <person name="Haft D.H."/>
            <person name="Wu M."/>
            <person name="Ren Q."/>
            <person name="Rosovitz M.J."/>
            <person name="Madupu R."/>
            <person name="Tallon L."/>
            <person name="Kim M."/>
            <person name="Jin S."/>
            <person name="Vuong H."/>
            <person name="Stine O.C."/>
            <person name="Ali A."/>
            <person name="Horneman A.J."/>
            <person name="Heidelberg J.F."/>
        </authorList>
    </citation>
    <scope>NUCLEOTIDE SEQUENCE [LARGE SCALE GENOMIC DNA]</scope>
    <source>
        <strain>ATCC 7966 / DSM 30187 / BCRC 13018 / CCUG 14551 / JCM 1027 / KCTC 2358 / NCIMB 9240 / NCTC 8049</strain>
    </source>
</reference>
<evidence type="ECO:0000250" key="1"/>
<evidence type="ECO:0000255" key="2">
    <source>
        <dbReference type="HAMAP-Rule" id="MF_00118"/>
    </source>
</evidence>
<dbReference type="EC" id="3.6.5.3" evidence="2"/>
<dbReference type="EMBL" id="CP000462">
    <property type="protein sequence ID" value="ABK36093.1"/>
    <property type="molecule type" value="Genomic_DNA"/>
</dbReference>
<dbReference type="EMBL" id="CP000462">
    <property type="protein sequence ID" value="ABK38829.1"/>
    <property type="molecule type" value="Genomic_DNA"/>
</dbReference>
<dbReference type="RefSeq" id="YP_858446.1">
    <property type="nucleotide sequence ID" value="NC_008570.1"/>
</dbReference>
<dbReference type="RefSeq" id="YP_858463.1">
    <property type="nucleotide sequence ID" value="NC_008570.1"/>
</dbReference>
<dbReference type="SMR" id="A0KQ95"/>
<dbReference type="STRING" id="380703.AHA_4018"/>
<dbReference type="EnsemblBacteria" id="ABK36093">
    <property type="protein sequence ID" value="ABK36093"/>
    <property type="gene ID" value="AHA_4018"/>
</dbReference>
<dbReference type="EnsemblBacteria" id="ABK38829">
    <property type="protein sequence ID" value="ABK38829"/>
    <property type="gene ID" value="AHA_4036"/>
</dbReference>
<dbReference type="GeneID" id="4488035"/>
<dbReference type="KEGG" id="aha:AHA_4018"/>
<dbReference type="KEGG" id="aha:AHA_4036"/>
<dbReference type="PATRIC" id="fig|380703.7.peg.3978"/>
<dbReference type="eggNOG" id="COG0050">
    <property type="taxonomic scope" value="Bacteria"/>
</dbReference>
<dbReference type="HOGENOM" id="CLU_007265_0_1_6"/>
<dbReference type="OrthoDB" id="9803139at2"/>
<dbReference type="Proteomes" id="UP000000756">
    <property type="component" value="Chromosome"/>
</dbReference>
<dbReference type="GO" id="GO:0005829">
    <property type="term" value="C:cytosol"/>
    <property type="evidence" value="ECO:0007669"/>
    <property type="project" value="TreeGrafter"/>
</dbReference>
<dbReference type="GO" id="GO:0005525">
    <property type="term" value="F:GTP binding"/>
    <property type="evidence" value="ECO:0007669"/>
    <property type="project" value="UniProtKB-UniRule"/>
</dbReference>
<dbReference type="GO" id="GO:0003924">
    <property type="term" value="F:GTPase activity"/>
    <property type="evidence" value="ECO:0007669"/>
    <property type="project" value="InterPro"/>
</dbReference>
<dbReference type="GO" id="GO:0097216">
    <property type="term" value="F:guanosine tetraphosphate binding"/>
    <property type="evidence" value="ECO:0007669"/>
    <property type="project" value="UniProtKB-ARBA"/>
</dbReference>
<dbReference type="GO" id="GO:0003746">
    <property type="term" value="F:translation elongation factor activity"/>
    <property type="evidence" value="ECO:0007669"/>
    <property type="project" value="UniProtKB-UniRule"/>
</dbReference>
<dbReference type="CDD" id="cd01884">
    <property type="entry name" value="EF_Tu"/>
    <property type="match status" value="1"/>
</dbReference>
<dbReference type="CDD" id="cd03697">
    <property type="entry name" value="EFTU_II"/>
    <property type="match status" value="1"/>
</dbReference>
<dbReference type="CDD" id="cd03707">
    <property type="entry name" value="EFTU_III"/>
    <property type="match status" value="1"/>
</dbReference>
<dbReference type="FunFam" id="2.40.30.10:FF:000001">
    <property type="entry name" value="Elongation factor Tu"/>
    <property type="match status" value="1"/>
</dbReference>
<dbReference type="FunFam" id="3.40.50.300:FF:000003">
    <property type="entry name" value="Elongation factor Tu"/>
    <property type="match status" value="1"/>
</dbReference>
<dbReference type="Gene3D" id="3.40.50.300">
    <property type="entry name" value="P-loop containing nucleotide triphosphate hydrolases"/>
    <property type="match status" value="1"/>
</dbReference>
<dbReference type="Gene3D" id="2.40.30.10">
    <property type="entry name" value="Translation factors"/>
    <property type="match status" value="2"/>
</dbReference>
<dbReference type="HAMAP" id="MF_00118_B">
    <property type="entry name" value="EF_Tu_B"/>
    <property type="match status" value="1"/>
</dbReference>
<dbReference type="InterPro" id="IPR041709">
    <property type="entry name" value="EF-Tu_GTP-bd"/>
</dbReference>
<dbReference type="InterPro" id="IPR050055">
    <property type="entry name" value="EF-Tu_GTPase"/>
</dbReference>
<dbReference type="InterPro" id="IPR004161">
    <property type="entry name" value="EFTu-like_2"/>
</dbReference>
<dbReference type="InterPro" id="IPR033720">
    <property type="entry name" value="EFTU_2"/>
</dbReference>
<dbReference type="InterPro" id="IPR031157">
    <property type="entry name" value="G_TR_CS"/>
</dbReference>
<dbReference type="InterPro" id="IPR027417">
    <property type="entry name" value="P-loop_NTPase"/>
</dbReference>
<dbReference type="InterPro" id="IPR005225">
    <property type="entry name" value="Small_GTP-bd"/>
</dbReference>
<dbReference type="InterPro" id="IPR000795">
    <property type="entry name" value="T_Tr_GTP-bd_dom"/>
</dbReference>
<dbReference type="InterPro" id="IPR009000">
    <property type="entry name" value="Transl_B-barrel_sf"/>
</dbReference>
<dbReference type="InterPro" id="IPR009001">
    <property type="entry name" value="Transl_elong_EF1A/Init_IF2_C"/>
</dbReference>
<dbReference type="InterPro" id="IPR004541">
    <property type="entry name" value="Transl_elong_EFTu/EF1A_bac/org"/>
</dbReference>
<dbReference type="InterPro" id="IPR004160">
    <property type="entry name" value="Transl_elong_EFTu/EF1A_C"/>
</dbReference>
<dbReference type="NCBIfam" id="TIGR00485">
    <property type="entry name" value="EF-Tu"/>
    <property type="match status" value="1"/>
</dbReference>
<dbReference type="NCBIfam" id="NF000766">
    <property type="entry name" value="PRK00049.1"/>
    <property type="match status" value="1"/>
</dbReference>
<dbReference type="NCBIfam" id="NF009372">
    <property type="entry name" value="PRK12735.1"/>
    <property type="match status" value="1"/>
</dbReference>
<dbReference type="NCBIfam" id="NF009373">
    <property type="entry name" value="PRK12736.1"/>
    <property type="match status" value="1"/>
</dbReference>
<dbReference type="NCBIfam" id="TIGR00231">
    <property type="entry name" value="small_GTP"/>
    <property type="match status" value="1"/>
</dbReference>
<dbReference type="PANTHER" id="PTHR43721:SF22">
    <property type="entry name" value="ELONGATION FACTOR TU, MITOCHONDRIAL"/>
    <property type="match status" value="1"/>
</dbReference>
<dbReference type="PANTHER" id="PTHR43721">
    <property type="entry name" value="ELONGATION FACTOR TU-RELATED"/>
    <property type="match status" value="1"/>
</dbReference>
<dbReference type="Pfam" id="PF00009">
    <property type="entry name" value="GTP_EFTU"/>
    <property type="match status" value="1"/>
</dbReference>
<dbReference type="Pfam" id="PF03144">
    <property type="entry name" value="GTP_EFTU_D2"/>
    <property type="match status" value="1"/>
</dbReference>
<dbReference type="Pfam" id="PF03143">
    <property type="entry name" value="GTP_EFTU_D3"/>
    <property type="match status" value="1"/>
</dbReference>
<dbReference type="PRINTS" id="PR00315">
    <property type="entry name" value="ELONGATNFCT"/>
</dbReference>
<dbReference type="SUPFAM" id="SSF50465">
    <property type="entry name" value="EF-Tu/eEF-1alpha/eIF2-gamma C-terminal domain"/>
    <property type="match status" value="1"/>
</dbReference>
<dbReference type="SUPFAM" id="SSF52540">
    <property type="entry name" value="P-loop containing nucleoside triphosphate hydrolases"/>
    <property type="match status" value="1"/>
</dbReference>
<dbReference type="SUPFAM" id="SSF50447">
    <property type="entry name" value="Translation proteins"/>
    <property type="match status" value="1"/>
</dbReference>
<dbReference type="PROSITE" id="PS00301">
    <property type="entry name" value="G_TR_1"/>
    <property type="match status" value="1"/>
</dbReference>
<dbReference type="PROSITE" id="PS51722">
    <property type="entry name" value="G_TR_2"/>
    <property type="match status" value="1"/>
</dbReference>
<sequence length="394" mass="43382">MSKEKFERNKPHVNVGTIGHVDHGKTTLTAAITNVLAKHFGGKAFAFDQIDKAPEERERGITINTSHVEYDTATRHYAHVDCPGHADYVKNMITGAAQMDGAILVVAATDGPMPQTREHILLGRQVGVPYIIVFMNKCDMVDDEELLELVEMEVRELLSEYDFPGDDLPVVRGSALKALEGEAQWEEKILELAGHLDTYIPEPERAIDLPFLMPIEDVFSIAGRGTVVTGRVERGIVKVGEEVEIVGIKDTTKTTCTGVEMFRKLLDEGRAGENIGALLRGVKREDVERGQVLAKPGTIKPHTKFESEVYVLSKEEGGRHTPFFKGYRPQFYFRTTDVTGTIELPEGVEMVMPGDNIKMVVTLIAPIAMDDGLRFAIREGGRTVGAGVVAKVIA</sequence>
<feature type="chain" id="PRO_0000337306" description="Elongation factor Tu">
    <location>
        <begin position="1"/>
        <end position="394"/>
    </location>
</feature>
<feature type="domain" description="tr-type G">
    <location>
        <begin position="10"/>
        <end position="204"/>
    </location>
</feature>
<feature type="region of interest" description="G1" evidence="1">
    <location>
        <begin position="19"/>
        <end position="26"/>
    </location>
</feature>
<feature type="region of interest" description="G2" evidence="1">
    <location>
        <begin position="60"/>
        <end position="64"/>
    </location>
</feature>
<feature type="region of interest" description="G3" evidence="1">
    <location>
        <begin position="81"/>
        <end position="84"/>
    </location>
</feature>
<feature type="region of interest" description="G4" evidence="1">
    <location>
        <begin position="136"/>
        <end position="139"/>
    </location>
</feature>
<feature type="region of interest" description="G5" evidence="1">
    <location>
        <begin position="174"/>
        <end position="176"/>
    </location>
</feature>
<feature type="binding site" evidence="2">
    <location>
        <begin position="19"/>
        <end position="26"/>
    </location>
    <ligand>
        <name>GTP</name>
        <dbReference type="ChEBI" id="CHEBI:37565"/>
    </ligand>
</feature>
<feature type="binding site" evidence="2">
    <location>
        <position position="26"/>
    </location>
    <ligand>
        <name>Mg(2+)</name>
        <dbReference type="ChEBI" id="CHEBI:18420"/>
    </ligand>
</feature>
<feature type="binding site" evidence="2">
    <location>
        <begin position="81"/>
        <end position="85"/>
    </location>
    <ligand>
        <name>GTP</name>
        <dbReference type="ChEBI" id="CHEBI:37565"/>
    </ligand>
</feature>
<feature type="binding site" evidence="2">
    <location>
        <begin position="136"/>
        <end position="139"/>
    </location>
    <ligand>
        <name>GTP</name>
        <dbReference type="ChEBI" id="CHEBI:37565"/>
    </ligand>
</feature>
<gene>
    <name evidence="2" type="primary">tuf1</name>
    <name type="synonym">tuf-1</name>
    <name type="ordered locus">AHA_4018</name>
</gene>
<gene>
    <name evidence="2" type="primary">tuf2</name>
    <name type="synonym">tuf-2</name>
    <name type="ordered locus">AHA_4036</name>
</gene>
<organism>
    <name type="scientific">Aeromonas hydrophila subsp. hydrophila (strain ATCC 7966 / DSM 30187 / BCRC 13018 / CCUG 14551 / JCM 1027 / KCTC 2358 / NCIMB 9240 / NCTC 8049)</name>
    <dbReference type="NCBI Taxonomy" id="380703"/>
    <lineage>
        <taxon>Bacteria</taxon>
        <taxon>Pseudomonadati</taxon>
        <taxon>Pseudomonadota</taxon>
        <taxon>Gammaproteobacteria</taxon>
        <taxon>Aeromonadales</taxon>
        <taxon>Aeromonadaceae</taxon>
        <taxon>Aeromonas</taxon>
    </lineage>
</organism>
<accession>A0KQ95</accession>